<evidence type="ECO:0000255" key="1"/>
<reference key="1">
    <citation type="journal article" date="1997" name="Science">
        <title>The complete genome sequence of Escherichia coli K-12.</title>
        <authorList>
            <person name="Blattner F.R."/>
            <person name="Plunkett G. III"/>
            <person name="Bloch C.A."/>
            <person name="Perna N.T."/>
            <person name="Burland V."/>
            <person name="Riley M."/>
            <person name="Collado-Vides J."/>
            <person name="Glasner J.D."/>
            <person name="Rode C.K."/>
            <person name="Mayhew G.F."/>
            <person name="Gregor J."/>
            <person name="Davis N.W."/>
            <person name="Kirkpatrick H.A."/>
            <person name="Goeden M.A."/>
            <person name="Rose D.J."/>
            <person name="Mau B."/>
            <person name="Shao Y."/>
        </authorList>
    </citation>
    <scope>NUCLEOTIDE SEQUENCE [LARGE SCALE GENOMIC DNA]</scope>
    <source>
        <strain>K12 / MG1655 / ATCC 47076</strain>
    </source>
</reference>
<reference key="2">
    <citation type="journal article" date="2006" name="Mol. Syst. Biol.">
        <title>Highly accurate genome sequences of Escherichia coli K-12 strains MG1655 and W3110.</title>
        <authorList>
            <person name="Hayashi K."/>
            <person name="Morooka N."/>
            <person name="Yamamoto Y."/>
            <person name="Fujita K."/>
            <person name="Isono K."/>
            <person name="Choi S."/>
            <person name="Ohtsubo E."/>
            <person name="Baba T."/>
            <person name="Wanner B.L."/>
            <person name="Mori H."/>
            <person name="Horiuchi T."/>
        </authorList>
    </citation>
    <scope>NUCLEOTIDE SEQUENCE [LARGE SCALE GENOMIC DNA]</scope>
    <source>
        <strain>K12 / W3110 / ATCC 27325 / DSM 5911</strain>
    </source>
</reference>
<reference key="3">
    <citation type="journal article" date="2002" name="Proc. Natl. Acad. Sci. U.S.A.">
        <title>Direct detection of potential selenium delivery proteins by using an Escherichia coli strain unable to incorporate selenium from selenite into proteins.</title>
        <authorList>
            <person name="Lacourciere G.M."/>
            <person name="Levine R.L."/>
            <person name="Stadtman T.C."/>
        </authorList>
    </citation>
    <scope>SELENIUM BINDING</scope>
</reference>
<sequence length="67" mass="7276">MTTYDRNRNAITTGSRVMVSGTGHTGKILSIDTEGLTAEQIRRGKTVVVEGCEEKLAPLDLIRLGMN</sequence>
<keyword id="KW-1185">Reference proteome</keyword>
<keyword id="KW-0711">Selenium</keyword>
<dbReference type="EMBL" id="U00096">
    <property type="protein sequence ID" value="AAC74614.1"/>
    <property type="molecule type" value="Genomic_DNA"/>
</dbReference>
<dbReference type="EMBL" id="AP009048">
    <property type="protein sequence ID" value="BAE76463.1"/>
    <property type="molecule type" value="Genomic_DNA"/>
</dbReference>
<dbReference type="PIR" id="H64908">
    <property type="entry name" value="H64908"/>
</dbReference>
<dbReference type="RefSeq" id="NP_416059.1">
    <property type="nucleotide sequence ID" value="NC_000913.3"/>
</dbReference>
<dbReference type="RefSeq" id="WP_000214712.1">
    <property type="nucleotide sequence ID" value="NZ_STEB01000003.1"/>
</dbReference>
<dbReference type="BioGRID" id="4261738">
    <property type="interactions" value="18"/>
</dbReference>
<dbReference type="BioGRID" id="853079">
    <property type="interactions" value="1"/>
</dbReference>
<dbReference type="DIP" id="DIP-48219N"/>
<dbReference type="FunCoup" id="P64463">
    <property type="interactions" value="69"/>
</dbReference>
<dbReference type="IntAct" id="P64463">
    <property type="interactions" value="12"/>
</dbReference>
<dbReference type="STRING" id="511145.b1541"/>
<dbReference type="jPOST" id="P64463"/>
<dbReference type="PaxDb" id="511145-b1541"/>
<dbReference type="EnsemblBacteria" id="AAC74614">
    <property type="protein sequence ID" value="AAC74614"/>
    <property type="gene ID" value="b1541"/>
</dbReference>
<dbReference type="GeneID" id="93775705"/>
<dbReference type="GeneID" id="948796"/>
<dbReference type="KEGG" id="ecj:JW1534"/>
<dbReference type="KEGG" id="eco:b1541"/>
<dbReference type="KEGG" id="ecoc:C3026_08900"/>
<dbReference type="PATRIC" id="fig|1411691.4.peg.724"/>
<dbReference type="EchoBASE" id="EB3599"/>
<dbReference type="eggNOG" id="ENOG503308E">
    <property type="taxonomic scope" value="Bacteria"/>
</dbReference>
<dbReference type="HOGENOM" id="CLU_189992_0_0_6"/>
<dbReference type="InParanoid" id="P64463"/>
<dbReference type="OMA" id="VMINGTG"/>
<dbReference type="OrthoDB" id="6505358at2"/>
<dbReference type="PhylomeDB" id="P64463"/>
<dbReference type="BioCyc" id="EcoCyc:G6815-MONOMER"/>
<dbReference type="PRO" id="PR:P64463"/>
<dbReference type="Proteomes" id="UP000000625">
    <property type="component" value="Chromosome"/>
</dbReference>
<dbReference type="GO" id="GO:0005829">
    <property type="term" value="C:cytosol"/>
    <property type="evidence" value="ECO:0000314"/>
    <property type="project" value="EcoCyc"/>
</dbReference>
<dbReference type="InterPro" id="IPR017704">
    <property type="entry name" value="Se-bd_putative_YdfZ"/>
</dbReference>
<dbReference type="NCBIfam" id="TIGR03318">
    <property type="entry name" value="YdfZ_fam"/>
    <property type="match status" value="1"/>
</dbReference>
<dbReference type="Pfam" id="PF14001">
    <property type="entry name" value="YdfZ"/>
    <property type="match status" value="1"/>
</dbReference>
<feature type="chain" id="PRO_0000168963" description="Putative selenoprotein YdfZ">
    <location>
        <begin position="1"/>
        <end position="67"/>
    </location>
</feature>
<feature type="modified residue" description="S-selanylcysteine" evidence="1">
    <location>
        <position position="52"/>
    </location>
</feature>
<protein>
    <recommendedName>
        <fullName>Putative selenoprotein YdfZ</fullName>
    </recommendedName>
</protein>
<proteinExistence type="evidence at protein level"/>
<organism>
    <name type="scientific">Escherichia coli (strain K12)</name>
    <dbReference type="NCBI Taxonomy" id="83333"/>
    <lineage>
        <taxon>Bacteria</taxon>
        <taxon>Pseudomonadati</taxon>
        <taxon>Pseudomonadota</taxon>
        <taxon>Gammaproteobacteria</taxon>
        <taxon>Enterobacterales</taxon>
        <taxon>Enterobacteriaceae</taxon>
        <taxon>Escherichia</taxon>
    </lineage>
</organism>
<gene>
    <name type="primary">ydfZ</name>
    <name type="ordered locus">b1541</name>
    <name type="ordered locus">JW1534</name>
</gene>
<name>YDFZ_ECOLI</name>
<accession>P64463</accession>
<accession>P76153</accession>
<accession>Q2MB93</accession>